<name>Y137_ADE02</name>
<organism>
    <name type="scientific">Human adenovirus C serotype 2</name>
    <name type="common">HAdV-2</name>
    <name type="synonym">Human adenovirus 2</name>
    <dbReference type="NCBI Taxonomy" id="10515"/>
    <lineage>
        <taxon>Viruses</taxon>
        <taxon>Varidnaviria</taxon>
        <taxon>Bamfordvirae</taxon>
        <taxon>Preplasmiviricota</taxon>
        <taxon>Tectiliviricetes</taxon>
        <taxon>Rowavirales</taxon>
        <taxon>Adenoviridae</taxon>
        <taxon>Mastadenovirus</taxon>
        <taxon>Human mastadenovirus C</taxon>
    </lineage>
</organism>
<keyword id="KW-1185">Reference proteome</keyword>
<feature type="chain" id="PRO_0000221923" description="Uncharacterized protein B-137">
    <location>
        <begin position="1"/>
        <end position="137"/>
    </location>
</feature>
<feature type="region of interest" description="Disordered" evidence="1">
    <location>
        <begin position="1"/>
        <end position="23"/>
    </location>
</feature>
<feature type="compositionally biased region" description="Low complexity" evidence="1">
    <location>
        <begin position="1"/>
        <end position="10"/>
    </location>
</feature>
<feature type="compositionally biased region" description="Gly residues" evidence="1">
    <location>
        <begin position="11"/>
        <end position="20"/>
    </location>
</feature>
<dbReference type="EMBL" id="J01917">
    <property type="status" value="NOT_ANNOTATED_CDS"/>
    <property type="molecule type" value="Genomic_DNA"/>
</dbReference>
<dbReference type="PIR" id="E92351">
    <property type="entry name" value="A03865"/>
</dbReference>
<dbReference type="SMR" id="P03293"/>
<dbReference type="Proteomes" id="UP000008167">
    <property type="component" value="Segment"/>
</dbReference>
<reference key="1">
    <citation type="journal article" date="1982" name="J. Biol. Chem.">
        <title>Nucleotide sequences from the adenovirus-2 genome.</title>
        <authorList>
            <person name="Gingeras T.R."/>
            <person name="Sciaky D."/>
            <person name="Gelinas R.E."/>
            <person name="Bing-Dong J."/>
            <person name="Yen C.E."/>
            <person name="Kelly M.M."/>
            <person name="Bullock P.A."/>
            <person name="Parsons B.L."/>
            <person name="O'Neill K.E."/>
            <person name="Roberts R.J."/>
        </authorList>
    </citation>
    <scope>NUCLEOTIDE SEQUENCE [GENOMIC DNA]</scope>
</reference>
<reference key="2">
    <citation type="journal article" date="1982" name="J. Biol. Chem.">
        <title>DNA sequence analysis of the region encoding the terminal protein and the hypothetical N-gene product of adenovirus type 2.</title>
        <authorList>
            <person name="Alestroem P."/>
            <person name="Akusjaervi G."/>
            <person name="Pettersson M."/>
            <person name="Pettersson U."/>
        </authorList>
    </citation>
    <scope>NUCLEOTIDE SEQUENCE [GENOMIC DNA]</scope>
</reference>
<evidence type="ECO:0000256" key="1">
    <source>
        <dbReference type="SAM" id="MobiDB-lite"/>
    </source>
</evidence>
<organismHost>
    <name type="scientific">Homo sapiens</name>
    <name type="common">Human</name>
    <dbReference type="NCBI Taxonomy" id="9606"/>
</organismHost>
<accession>P03293</accession>
<protein>
    <recommendedName>
        <fullName>Uncharacterized protein B-137</fullName>
    </recommendedName>
</protein>
<sequence length="137" mass="14356">MISVDVPGHPGDAGGGGGGARKVADAVPDVAQRQKVLHGRDALAGEACAVVDALDRAKGEPVSGHSSVVWWINSQGYHGGRPGFEPRIRPSAVIHAVTARVSNPGVRRQTTGERSFWLPSRRGGCCASFFGHWPRAA</sequence>
<proteinExistence type="predicted"/>